<reference key="1">
    <citation type="journal article" date="2007" name="Theor. Appl. Genet.">
        <title>Complete chloroplast genome sequences of Hordeum vulgare, Sorghum bicolor and Agrostis stolonifera, and comparative analyses with other grass genomes.</title>
        <authorList>
            <person name="Saski C."/>
            <person name="Lee S.-B."/>
            <person name="Fjellheim S."/>
            <person name="Guda C."/>
            <person name="Jansen R.K."/>
            <person name="Luo H."/>
            <person name="Tomkins J."/>
            <person name="Rognli O.A."/>
            <person name="Daniell H."/>
            <person name="Clarke J.L."/>
        </authorList>
    </citation>
    <scope>NUCLEOTIDE SEQUENCE [LARGE SCALE GENOMIC DNA]</scope>
    <source>
        <strain>cv. Morex</strain>
    </source>
</reference>
<protein>
    <recommendedName>
        <fullName evidence="1">ATP synthase subunit c, chloroplastic</fullName>
    </recommendedName>
    <alternativeName>
        <fullName evidence="1">ATP synthase F(0) sector subunit c</fullName>
    </alternativeName>
    <alternativeName>
        <fullName evidence="1">ATPase subunit III</fullName>
    </alternativeName>
    <alternativeName>
        <fullName evidence="1">F-type ATPase subunit c</fullName>
        <shortName evidence="1">F-ATPase subunit c</shortName>
    </alternativeName>
    <alternativeName>
        <fullName evidence="1">Lipid-binding protein</fullName>
    </alternativeName>
</protein>
<sequence>MNPLIAAASVIAAGLAVGLASIGPGVGQGTAAGQAVEGIARQPEAEGKIRGTLLLSLAFMEALTIYGLVVALALLFANPFV</sequence>
<geneLocation type="chloroplast"/>
<dbReference type="EMBL" id="EF115541">
    <property type="protein sequence ID" value="ABK79408.1"/>
    <property type="molecule type" value="Genomic_DNA"/>
</dbReference>
<dbReference type="RefSeq" id="YP_010144420.1">
    <property type="nucleotide sequence ID" value="NC_056985.1"/>
</dbReference>
<dbReference type="RefSeq" id="YP_874648.1">
    <property type="nucleotide sequence ID" value="NC_008590.1"/>
</dbReference>
<dbReference type="SMR" id="A1E9I6"/>
<dbReference type="GeneID" id="4525125"/>
<dbReference type="GeneID" id="67140622"/>
<dbReference type="GO" id="GO:0009535">
    <property type="term" value="C:chloroplast thylakoid membrane"/>
    <property type="evidence" value="ECO:0007669"/>
    <property type="project" value="UniProtKB-SubCell"/>
</dbReference>
<dbReference type="GO" id="GO:0045259">
    <property type="term" value="C:proton-transporting ATP synthase complex"/>
    <property type="evidence" value="ECO:0007669"/>
    <property type="project" value="UniProtKB-KW"/>
</dbReference>
<dbReference type="GO" id="GO:0033177">
    <property type="term" value="C:proton-transporting two-sector ATPase complex, proton-transporting domain"/>
    <property type="evidence" value="ECO:0007669"/>
    <property type="project" value="InterPro"/>
</dbReference>
<dbReference type="GO" id="GO:0008289">
    <property type="term" value="F:lipid binding"/>
    <property type="evidence" value="ECO:0007669"/>
    <property type="project" value="UniProtKB-KW"/>
</dbReference>
<dbReference type="GO" id="GO:0046933">
    <property type="term" value="F:proton-transporting ATP synthase activity, rotational mechanism"/>
    <property type="evidence" value="ECO:0007669"/>
    <property type="project" value="UniProtKB-UniRule"/>
</dbReference>
<dbReference type="CDD" id="cd18183">
    <property type="entry name" value="ATP-synt_Fo_c_ATPH"/>
    <property type="match status" value="1"/>
</dbReference>
<dbReference type="FunFam" id="1.20.20.10:FF:000001">
    <property type="entry name" value="ATP synthase subunit c, chloroplastic"/>
    <property type="match status" value="1"/>
</dbReference>
<dbReference type="Gene3D" id="1.20.20.10">
    <property type="entry name" value="F1F0 ATP synthase subunit C"/>
    <property type="match status" value="1"/>
</dbReference>
<dbReference type="HAMAP" id="MF_01396">
    <property type="entry name" value="ATP_synth_c_bact"/>
    <property type="match status" value="1"/>
</dbReference>
<dbReference type="InterPro" id="IPR005953">
    <property type="entry name" value="ATP_synth_csu_bac/chlpt"/>
</dbReference>
<dbReference type="InterPro" id="IPR000454">
    <property type="entry name" value="ATP_synth_F0_csu"/>
</dbReference>
<dbReference type="InterPro" id="IPR020537">
    <property type="entry name" value="ATP_synth_F0_csu_DDCD_BS"/>
</dbReference>
<dbReference type="InterPro" id="IPR038662">
    <property type="entry name" value="ATP_synth_F0_csu_sf"/>
</dbReference>
<dbReference type="InterPro" id="IPR002379">
    <property type="entry name" value="ATPase_proteolipid_c-like_dom"/>
</dbReference>
<dbReference type="InterPro" id="IPR035921">
    <property type="entry name" value="F/V-ATP_Csub_sf"/>
</dbReference>
<dbReference type="NCBIfam" id="TIGR01260">
    <property type="entry name" value="ATP_synt_c"/>
    <property type="match status" value="1"/>
</dbReference>
<dbReference type="NCBIfam" id="NF005608">
    <property type="entry name" value="PRK07354.1"/>
    <property type="match status" value="1"/>
</dbReference>
<dbReference type="PANTHER" id="PTHR10031">
    <property type="entry name" value="ATP SYNTHASE LIPID-BINDING PROTEIN, MITOCHONDRIAL"/>
    <property type="match status" value="1"/>
</dbReference>
<dbReference type="PANTHER" id="PTHR10031:SF0">
    <property type="entry name" value="ATPASE PROTEIN 9"/>
    <property type="match status" value="1"/>
</dbReference>
<dbReference type="Pfam" id="PF00137">
    <property type="entry name" value="ATP-synt_C"/>
    <property type="match status" value="1"/>
</dbReference>
<dbReference type="PRINTS" id="PR00124">
    <property type="entry name" value="ATPASEC"/>
</dbReference>
<dbReference type="SUPFAM" id="SSF81333">
    <property type="entry name" value="F1F0 ATP synthase subunit C"/>
    <property type="match status" value="1"/>
</dbReference>
<dbReference type="PROSITE" id="PS00605">
    <property type="entry name" value="ATPASE_C"/>
    <property type="match status" value="1"/>
</dbReference>
<comment type="function">
    <text evidence="1">F(1)F(0) ATP synthase produces ATP from ADP in the presence of a proton or sodium gradient. F-type ATPases consist of two structural domains, F(1) containing the extramembraneous catalytic core and F(0) containing the membrane proton channel, linked together by a central stalk and a peripheral stalk. During catalysis, ATP synthesis in the catalytic domain of F(1) is coupled via a rotary mechanism of the central stalk subunits to proton translocation.</text>
</comment>
<comment type="function">
    <text evidence="1">Key component of the F(0) channel; it plays a direct role in translocation across the membrane. A homomeric c-ring of between 10-14 subunits forms the central stalk rotor element with the F(1) delta and epsilon subunits.</text>
</comment>
<comment type="subunit">
    <text evidence="1">F-type ATPases have 2 components, F(1) - the catalytic core - and F(0) - the membrane proton channel. F(1) has five subunits: alpha(3), beta(3), gamma(1), delta(1), epsilon(1). F(0) has four main subunits: a(1), b(1), b'(1) and c(10-14). The alpha and beta chains form an alternating ring which encloses part of the gamma chain. F(1) is attached to F(0) by a central stalk formed by the gamma and epsilon chains, while a peripheral stalk is formed by the delta, b and b' chains.</text>
</comment>
<comment type="subcellular location">
    <subcellularLocation>
        <location evidence="1">Plastid</location>
        <location evidence="1">Chloroplast thylakoid membrane</location>
        <topology evidence="1">Multi-pass membrane protein</topology>
    </subcellularLocation>
</comment>
<comment type="miscellaneous">
    <text>In plastids the F-type ATPase is also known as CF(1)CF(0).</text>
</comment>
<comment type="similarity">
    <text evidence="1">Belongs to the ATPase C chain family.</text>
</comment>
<organism>
    <name type="scientific">Hordeum vulgare</name>
    <name type="common">Barley</name>
    <dbReference type="NCBI Taxonomy" id="4513"/>
    <lineage>
        <taxon>Eukaryota</taxon>
        <taxon>Viridiplantae</taxon>
        <taxon>Streptophyta</taxon>
        <taxon>Embryophyta</taxon>
        <taxon>Tracheophyta</taxon>
        <taxon>Spermatophyta</taxon>
        <taxon>Magnoliopsida</taxon>
        <taxon>Liliopsida</taxon>
        <taxon>Poales</taxon>
        <taxon>Poaceae</taxon>
        <taxon>BOP clade</taxon>
        <taxon>Pooideae</taxon>
        <taxon>Triticodae</taxon>
        <taxon>Triticeae</taxon>
        <taxon>Hordeinae</taxon>
        <taxon>Hordeum</taxon>
    </lineage>
</organism>
<proteinExistence type="inferred from homology"/>
<keyword id="KW-0066">ATP synthesis</keyword>
<keyword id="KW-0138">CF(0)</keyword>
<keyword id="KW-0150">Chloroplast</keyword>
<keyword id="KW-0375">Hydrogen ion transport</keyword>
<keyword id="KW-0406">Ion transport</keyword>
<keyword id="KW-0446">Lipid-binding</keyword>
<keyword id="KW-0472">Membrane</keyword>
<keyword id="KW-0934">Plastid</keyword>
<keyword id="KW-0793">Thylakoid</keyword>
<keyword id="KW-0812">Transmembrane</keyword>
<keyword id="KW-1133">Transmembrane helix</keyword>
<keyword id="KW-0813">Transport</keyword>
<feature type="chain" id="PRO_0000362922" description="ATP synthase subunit c, chloroplastic">
    <location>
        <begin position="1"/>
        <end position="81"/>
    </location>
</feature>
<feature type="transmembrane region" description="Helical" evidence="1">
    <location>
        <begin position="3"/>
        <end position="23"/>
    </location>
</feature>
<feature type="transmembrane region" description="Helical" evidence="1">
    <location>
        <begin position="57"/>
        <end position="77"/>
    </location>
</feature>
<feature type="site" description="Reversibly protonated during proton transport" evidence="1">
    <location>
        <position position="61"/>
    </location>
</feature>
<gene>
    <name evidence="1" type="primary">atpH</name>
</gene>
<evidence type="ECO:0000255" key="1">
    <source>
        <dbReference type="HAMAP-Rule" id="MF_01396"/>
    </source>
</evidence>
<accession>A1E9I6</accession>
<name>ATPH_HORVU</name>